<name>L_BDVV</name>
<sequence>MSFHASLLREEETPRPVAGINRTDQSLKNPLLGTEVSFCLKSSSLPHHVRALGQIKARNLASCDYYLLFRQVVLPPEVYPIGVLIRAAEAILTVIVSAWKLDHMTKTLYSSVRYALTNPRVRAQLELHIAYQRIVGQVSYSREADIGPKRLGNMSLQFIQSLVIATIDTTSCLMTYNHFLAAADTAKSRCHLLIASVVQGALWEQGSFLDHIINMIDIIDSINLPHDDYFTIIKSIFPYSQGLVMGRHNVSVSSDFASVFAIPELCPQLDSLLKKLLQLDPVLLLMVSSVQKSWYFPEIRMVDGSREQLHKMRVELETPQALLSYGHTLLSIFRAEFIKGYVSKNAKWPPVHLLPGCDKSIKNARELGRWSPAFDRRWQLFEKVVILRIADLDMDPDFNDIVSDKAIISSRRDWVFEYNAAAFWKKYGERLERPPARSGPSRLVNALIDGRLDNIPALLEPFYRGAVEFEDRLTVLVPKEKELKVKGRFFSKQTLAIRIYQVVAEAALKNEVMPYLKTHSMTMSSTALTHLLNRLSHTITKGDSFVINLDYSSWCNGFRPELQAPICRQLDQMFNCGYFFRTGCTLPCFTTFIIQDRFNPPYSLSGEPVEDGVTCAVGTKTMGEGMRQKLWTILTSCWEIIALREINVTFNILGQGDNQTIIIHKSASQNNQLLAERALGALYKHARLAGHNLKVEECWVSDCLYEYGKKLFFRGVPVPGCLKQLSRVTDSTGELFPNLYSKLACLTSSCLSAAMADTSPWVALATGVCLYLIELYVELPPAIIQDESLLTTLCLVGPSIGGLPTPATLPSVFFRGMSDPLPFQLALLQTLIKTTGVTCSLVNRVVKLRIAPYPDWLSLVTDPTSLNIAQVYRPERQIRRWIEEAIATSSHSSRIATFFQQPLTEMAQLLARDLSTMMPLRPRDMSALFALSNVAYGLSIIDLFQKSSTVVSASQAVHIEDVALESVRYKESIIQGLLDTTEGYNMQPYLEGCTYLAAKQLRRLTWGRDLVGVTMPFVAEQFHPHSSVGAKAELYLDAIIYCPQETLRSHHLTTRGDQPLYLGSNTAVKVQRGEITGLAKSRAANLVKDTLVLHQWYKVRKVTDPHLNTLMARFLLEKGYTSDARPSIQGGTLTHRLPSRGDSRQGLTGYVNILSTWLRFSSDYLHSFSKSSDDYTIHFQHVFTYGCLYADSVIRSGGVISTPYLLSASCKTCFEKIDSEEFVLACEPQYRGAEWLISKPVTVPEQITDAEVEFDPCVSASYCLGILIGKSFLVDIRASGHDIMEQRTWANLERFSVSDMQKLPWSIVIRSLWRFLIGARLLQFEKAGLIRMLYAATGPTFSFLMKVFQDSALLMDCAPLDRLSPRINFHSRGDLVAKLVLLPFINPGIVEIEVSGINSKYHAVSEANMDLYIAAAKSVGVKPTQFVEETNDFTARGHHHGCYSLSWSKSRNQSQVLKMVVRKLKLCVLYIYPTVDPAVALDLCHLPALTIILVLGGDPAYYERLLEMDLCGAVSSRVDIPHSLAARTHRGFAVGPDAGPGVIRLDRLESVCYAHPCLEELEFNAYLDSELVDISDMCCLPLATPCKALFRPIYRSLQSFRLALMDNYSFVMDLIMIRGLDIRPHLEEFDELLVVGQHILGQPVLVEVVYYVGVVRKRPVLARHPWSADLKRITVGGRAPCPSAARLRDEDCQGSLLVGLPAGLTQLLIID</sequence>
<gene>
    <name type="primary">L</name>
</gene>
<proteinExistence type="evidence at protein level"/>
<organism>
    <name type="scientific">Borna disease virus (strain V)</name>
    <name type="common">BDV</name>
    <dbReference type="NCBI Taxonomy" id="928296"/>
    <lineage>
        <taxon>Viruses</taxon>
        <taxon>Riboviria</taxon>
        <taxon>Orthornavirae</taxon>
        <taxon>Negarnaviricota</taxon>
        <taxon>Haploviricotina</taxon>
        <taxon>Monjiviricetes</taxon>
        <taxon>Mononegavirales</taxon>
        <taxon>Bornaviridae</taxon>
        <taxon>Borna disease virus</taxon>
    </lineage>
</organism>
<dbReference type="EC" id="2.7.7.48"/>
<dbReference type="EMBL" id="U04608">
    <property type="protein sequence ID" value="AAA20228.1"/>
    <property type="status" value="ALT_INIT"/>
    <property type="molecule type" value="Genomic_RNA"/>
</dbReference>
<dbReference type="EMBL" id="AJ311521">
    <property type="protein sequence ID" value="CAC70639.1"/>
    <property type="molecule type" value="Genomic_RNA"/>
</dbReference>
<dbReference type="RefSeq" id="NP_042024.3">
    <property type="nucleotide sequence ID" value="NC_001607.1"/>
</dbReference>
<dbReference type="SMR" id="P52639"/>
<dbReference type="Proteomes" id="UP000007804">
    <property type="component" value="Segment"/>
</dbReference>
<dbReference type="Proteomes" id="UP000124375">
    <property type="component" value="Genome"/>
</dbReference>
<dbReference type="GO" id="GO:0042025">
    <property type="term" value="C:host cell nucleus"/>
    <property type="evidence" value="ECO:0000314"/>
    <property type="project" value="UniProtKB"/>
</dbReference>
<dbReference type="GO" id="GO:0044423">
    <property type="term" value="C:virion component"/>
    <property type="evidence" value="ECO:0007669"/>
    <property type="project" value="UniProtKB-KW"/>
</dbReference>
<dbReference type="GO" id="GO:0005524">
    <property type="term" value="F:ATP binding"/>
    <property type="evidence" value="ECO:0007669"/>
    <property type="project" value="UniProtKB-KW"/>
</dbReference>
<dbReference type="GO" id="GO:0004482">
    <property type="term" value="F:mRNA 5'-cap (guanine-N7-)-methyltransferase activity"/>
    <property type="evidence" value="ECO:0007669"/>
    <property type="project" value="InterPro"/>
</dbReference>
<dbReference type="GO" id="GO:0003968">
    <property type="term" value="F:RNA-directed RNA polymerase activity"/>
    <property type="evidence" value="ECO:0007669"/>
    <property type="project" value="UniProtKB-KW"/>
</dbReference>
<dbReference type="InterPro" id="IPR026890">
    <property type="entry name" value="Mononeg_mRNAcap"/>
</dbReference>
<dbReference type="InterPro" id="IPR014023">
    <property type="entry name" value="Mononeg_RNA_pol_cat"/>
</dbReference>
<dbReference type="Pfam" id="PF14318">
    <property type="entry name" value="Mononeg_mRNAcap"/>
    <property type="match status" value="1"/>
</dbReference>
<dbReference type="Pfam" id="PF00946">
    <property type="entry name" value="Mononeg_RNA_pol"/>
    <property type="match status" value="1"/>
</dbReference>
<dbReference type="PROSITE" id="PS50526">
    <property type="entry name" value="RDRP_SSRNA_NEG_NONSEG"/>
    <property type="match status" value="1"/>
</dbReference>
<comment type="function">
    <text evidence="4 6 7">Displays RNA-directed RNA polymerase activity. The mRNA guanylyl transferase and mRNA (guanine-N(7)-)-methyltransferase activities are supposedly provided by cellular enzymes (PubMed:22138959). The template is composed of the viral RNA tightly encapsidated by the nucleoprotein (N). Functions either as transcriptase or as replicase. The transcriptase synthesizes subsequently three subgenomic RNAs, assuring their capping and polyadenylation by a stuttering mechanism. In replicase mode, the polymerase replicates the whole viral genome without recognizing the transcriptional signals.</text>
</comment>
<comment type="catalytic activity">
    <reaction evidence="1">
        <text>RNA(n) + a ribonucleoside 5'-triphosphate = RNA(n+1) + diphosphate</text>
        <dbReference type="Rhea" id="RHEA:21248"/>
        <dbReference type="Rhea" id="RHEA-COMP:14527"/>
        <dbReference type="Rhea" id="RHEA-COMP:17342"/>
        <dbReference type="ChEBI" id="CHEBI:33019"/>
        <dbReference type="ChEBI" id="CHEBI:61557"/>
        <dbReference type="ChEBI" id="CHEBI:140395"/>
        <dbReference type="EC" id="2.7.7.48"/>
    </reaction>
</comment>
<comment type="subunit">
    <text evidence="2">Interacts with the P protein.</text>
</comment>
<comment type="subcellular location">
    <subcellularLocation>
        <location evidence="5">Virion</location>
    </subcellularLocation>
    <subcellularLocation>
        <location evidence="3">Host nucleus</location>
    </subcellularLocation>
</comment>
<comment type="alternative products">
    <event type="alternative splicing"/>
    <isoform>
        <id>P52639-1</id>
        <name>Large structural protein</name>
        <sequence type="displayed"/>
    </isoform>
    <isoform>
        <id>P0C795-1</id>
        <name>Matrix protein</name>
        <sequence type="external"/>
    </isoform>
    <isoform>
        <id>P52638-1</id>
        <name>Envelope glycoprotein p57 precursor</name>
        <sequence type="external"/>
    </isoform>
</comment>
<comment type="sequence caution" evidence="5">
    <conflict type="erroneous initiation">
        <sequence resource="EMBL-CDS" id="AAA20228"/>
    </conflict>
</comment>
<protein>
    <recommendedName>
        <fullName>RNA-directed RNA polymerase L</fullName>
        <shortName>Protein L</shortName>
        <ecNumber>2.7.7.48</ecNumber>
    </recommendedName>
    <alternativeName>
        <fullName>Large structural protein</fullName>
    </alternativeName>
    <alternativeName>
        <fullName>Replicase</fullName>
    </alternativeName>
    <alternativeName>
        <fullName>Transcriptase</fullName>
    </alternativeName>
</protein>
<accession>P52639</accession>
<accession>Q912Z6</accession>
<feature type="chain" id="PRO_0000079207" description="RNA-directed RNA polymerase L">
    <location>
        <begin position="1"/>
        <end position="1711"/>
    </location>
</feature>
<feature type="domain" description="RdRp catalytic" evidence="1">
    <location>
        <begin position="543"/>
        <end position="715"/>
    </location>
</feature>
<feature type="short sequence motif" description="Nuclear localization signal" evidence="3">
    <location>
        <begin position="844"/>
        <end position="852"/>
    </location>
</feature>
<feature type="sequence variant">
    <original>A</original>
    <variation>G</variation>
    <location>
        <position position="1526"/>
    </location>
</feature>
<evidence type="ECO:0000255" key="1">
    <source>
        <dbReference type="PROSITE-ProRule" id="PRU00539"/>
    </source>
</evidence>
<evidence type="ECO:0000269" key="2">
    <source>
    </source>
</evidence>
<evidence type="ECO:0000269" key="3">
    <source>
    </source>
</evidence>
<evidence type="ECO:0000303" key="4">
    <source>
    </source>
</evidence>
<evidence type="ECO:0000305" key="5"/>
<evidence type="ECO:0000305" key="6">
    <source>
    </source>
</evidence>
<evidence type="ECO:0000305" key="7">
    <source>
    </source>
</evidence>
<keyword id="KW-0025">Alternative splicing</keyword>
<keyword id="KW-0067">ATP-binding</keyword>
<keyword id="KW-1048">Host nucleus</keyword>
<keyword id="KW-0506">mRNA capping</keyword>
<keyword id="KW-0507">mRNA processing</keyword>
<keyword id="KW-0511">Multifunctional enzyme</keyword>
<keyword id="KW-0547">Nucleotide-binding</keyword>
<keyword id="KW-0548">Nucleotidyltransferase</keyword>
<keyword id="KW-1185">Reference proteome</keyword>
<keyword id="KW-0696">RNA-directed RNA polymerase</keyword>
<keyword id="KW-0949">S-adenosyl-L-methionine</keyword>
<keyword id="KW-0808">Transferase</keyword>
<keyword id="KW-0693">Viral RNA replication</keyword>
<keyword id="KW-0946">Virion</keyword>
<organismHost>
    <name type="scientific">Bos taurus</name>
    <name type="common">Bovine</name>
    <dbReference type="NCBI Taxonomy" id="9913"/>
</organismHost>
<organismHost>
    <name type="scientific">Bradypodidae</name>
    <name type="common">three-fingered sloths</name>
    <dbReference type="NCBI Taxonomy" id="9352"/>
</organismHost>
<organismHost>
    <name type="scientific">Capra hircus</name>
    <name type="common">Goat</name>
    <dbReference type="NCBI Taxonomy" id="9925"/>
</organismHost>
<organismHost>
    <name type="scientific">Cervidae</name>
    <name type="common">Deer</name>
    <dbReference type="NCBI Taxonomy" id="9850"/>
</organismHost>
<organismHost>
    <name type="scientific">Crocidura leucodon</name>
    <name type="common">Bicoloured white-toothed shrew</name>
    <name type="synonym">Celebes shrew</name>
    <dbReference type="NCBI Taxonomy" id="109474"/>
</organismHost>
<organismHost>
    <name type="scientific">Equidae</name>
    <name type="common">horses</name>
    <dbReference type="NCBI Taxonomy" id="9788"/>
</organismHost>
<organismHost>
    <name type="scientific">Felis catus</name>
    <name type="common">Cat</name>
    <name type="synonym">Felis silvestris catus</name>
    <dbReference type="NCBI Taxonomy" id="9685"/>
</organismHost>
<organismHost>
    <name type="scientific">Hexaprotodon liberiensis</name>
    <name type="common">Pygmy hippopotamus</name>
    <name type="synonym">Choeropsis liberiensis</name>
    <dbReference type="NCBI Taxonomy" id="56798"/>
</organismHost>
<organismHost>
    <name type="scientific">Lama glama</name>
    <name type="common">Llama</name>
    <dbReference type="NCBI Taxonomy" id="9844"/>
</organismHost>
<organismHost>
    <name type="scientific">Oryctolagus cuniculus</name>
    <name type="common">Rabbit</name>
    <dbReference type="NCBI Taxonomy" id="9986"/>
</organismHost>
<organismHost>
    <name type="scientific">Ovis aries</name>
    <name type="common">Sheep</name>
    <dbReference type="NCBI Taxonomy" id="9940"/>
</organismHost>
<organismHost>
    <name type="scientific">Struthio camelus</name>
    <name type="common">Common ostrich</name>
    <dbReference type="NCBI Taxonomy" id="8801"/>
</organismHost>
<organismHost>
    <name type="scientific">Varecia variegata</name>
    <name type="common">Black-and-white ruffed lemur</name>
    <name type="synonym">Lemur variegatus</name>
    <dbReference type="NCBI Taxonomy" id="9455"/>
</organismHost>
<organismHost>
    <name type="scientific">Vicugna pacos</name>
    <name type="common">Alpaca</name>
    <name type="synonym">Lama pacos</name>
    <dbReference type="NCBI Taxonomy" id="30538"/>
</organismHost>
<reference key="1">
    <citation type="journal article" date="1994" name="Proc. Natl. Acad. Sci. U.S.A.">
        <title>Genomic organization of Borna disease virus.</title>
        <authorList>
            <person name="Briese T."/>
            <person name="Schneemann A."/>
            <person name="Lewis A.J."/>
            <person name="Park Y.-S."/>
            <person name="Kim S."/>
            <person name="Ludwig H."/>
            <person name="Lipkin W.I."/>
        </authorList>
    </citation>
    <scope>NUCLEOTIDE SEQUENCE [GENOMIC RNA]</scope>
</reference>
<reference key="2">
    <citation type="journal article" date="2001" name="J. Gen. Virol.">
        <title>Conservation of coding potential and terminal sequences in four different isolates of Borna disease virus.</title>
        <authorList>
            <person name="Pleschka S."/>
            <person name="Staeheli P."/>
            <person name="Kolodziejek J."/>
            <person name="Richt J.A."/>
            <person name="Nowotny N."/>
            <person name="Schwemmle M."/>
        </authorList>
    </citation>
    <scope>NUCLEOTIDE SEQUENCE [GENOMIC RNA]</scope>
    <source>
        <strain>V/FR</strain>
    </source>
</reference>
<reference key="3">
    <citation type="journal article" date="2000" name="J. Virol.">
        <title>Expression and characterization of the Borna disease virus polymerase.</title>
        <authorList>
            <person name="Walker M.P."/>
            <person name="Jordan I."/>
            <person name="Briese T."/>
            <person name="Fischer N."/>
            <person name="Lipkin W.I."/>
        </authorList>
    </citation>
    <scope>INTERACTION WITH P PROTEIN</scope>
</reference>
<reference key="4">
    <citation type="journal article" date="2002" name="J. Virol.">
        <title>Characterization of the nuclear localization signal of the borna disease virus polymerase.</title>
        <authorList>
            <person name="Walker M.P."/>
            <person name="Lipkin W.I."/>
        </authorList>
    </citation>
    <scope>SUBCELLULAR LOCATION</scope>
</reference>
<reference key="5">
    <citation type="journal article" date="2002" name="Front. Biosci.">
        <title>Borna disease virus and infection in humans.</title>
        <authorList>
            <person name="Ikuta K."/>
            <person name="Ibrahim M.S."/>
            <person name="Kobayashi T."/>
            <person name="Tomonaga K."/>
        </authorList>
    </citation>
    <scope>REVIEW</scope>
</reference>
<reference key="6">
    <citation type="journal article" date="2003" name="J. Virol.">
        <title>Active borna disease virus polymerase complex requires a distinct nucleoprotein-to-phosphoprotein ratio but no viral X protein.</title>
        <authorList>
            <person name="Schneider U."/>
            <person name="Naegele M."/>
            <person name="Staeheli P."/>
            <person name="Schwemmle M."/>
        </authorList>
    </citation>
    <scope>FUNCTION</scope>
</reference>
<reference key="7">
    <citation type="journal article" date="2008" name="J. Virol.">
        <title>Polymerase read-through at the first transcription termination site contributes to regulation of borna disease virus gene expression.</title>
        <authorList>
            <person name="Poenisch M."/>
            <person name="Wille S."/>
            <person name="Staeheli P."/>
            <person name="Schneider U."/>
        </authorList>
    </citation>
    <scope>FUNCTION</scope>
</reference>
<reference key="8">
    <citation type="journal article" date="2011" name="Nat. Rev. Microbiol.">
        <title>Conventional and unconventional mechanisms for capping viral mRNA.</title>
        <authorList>
            <person name="Decroly E."/>
            <person name="Ferron F."/>
            <person name="Lescar J."/>
            <person name="Canard B."/>
        </authorList>
    </citation>
    <scope>REVIEW</scope>
</reference>